<name>RK20_DAUCA</name>
<organism>
    <name type="scientific">Daucus carota</name>
    <name type="common">Wild carrot</name>
    <dbReference type="NCBI Taxonomy" id="4039"/>
    <lineage>
        <taxon>Eukaryota</taxon>
        <taxon>Viridiplantae</taxon>
        <taxon>Streptophyta</taxon>
        <taxon>Embryophyta</taxon>
        <taxon>Tracheophyta</taxon>
        <taxon>Spermatophyta</taxon>
        <taxon>Magnoliopsida</taxon>
        <taxon>eudicotyledons</taxon>
        <taxon>Gunneridae</taxon>
        <taxon>Pentapetalae</taxon>
        <taxon>asterids</taxon>
        <taxon>campanulids</taxon>
        <taxon>Apiales</taxon>
        <taxon>Apiaceae</taxon>
        <taxon>Apioideae</taxon>
        <taxon>Scandiceae</taxon>
        <taxon>Daucinae</taxon>
        <taxon>Daucus</taxon>
        <taxon>Daucus sect. Daucus</taxon>
    </lineage>
</organism>
<evidence type="ECO:0000255" key="1">
    <source>
        <dbReference type="HAMAP-Rule" id="MF_00382"/>
    </source>
</evidence>
<evidence type="ECO:0000305" key="2"/>
<gene>
    <name evidence="1" type="primary">rpl20</name>
</gene>
<dbReference type="EMBL" id="DQ898156">
    <property type="protein sequence ID" value="ABI32447.1"/>
    <property type="molecule type" value="Genomic_DNA"/>
</dbReference>
<dbReference type="RefSeq" id="YP_740140.1">
    <property type="nucleotide sequence ID" value="NC_008325.1"/>
</dbReference>
<dbReference type="SMR" id="Q0G9T9"/>
<dbReference type="GeneID" id="4266768"/>
<dbReference type="OMA" id="IHETEVF"/>
<dbReference type="GO" id="GO:0009507">
    <property type="term" value="C:chloroplast"/>
    <property type="evidence" value="ECO:0007669"/>
    <property type="project" value="UniProtKB-SubCell"/>
</dbReference>
<dbReference type="GO" id="GO:1990904">
    <property type="term" value="C:ribonucleoprotein complex"/>
    <property type="evidence" value="ECO:0007669"/>
    <property type="project" value="UniProtKB-KW"/>
</dbReference>
<dbReference type="GO" id="GO:0005840">
    <property type="term" value="C:ribosome"/>
    <property type="evidence" value="ECO:0007669"/>
    <property type="project" value="UniProtKB-KW"/>
</dbReference>
<dbReference type="GO" id="GO:0019843">
    <property type="term" value="F:rRNA binding"/>
    <property type="evidence" value="ECO:0007669"/>
    <property type="project" value="UniProtKB-UniRule"/>
</dbReference>
<dbReference type="GO" id="GO:0003735">
    <property type="term" value="F:structural constituent of ribosome"/>
    <property type="evidence" value="ECO:0007669"/>
    <property type="project" value="InterPro"/>
</dbReference>
<dbReference type="GO" id="GO:0000027">
    <property type="term" value="P:ribosomal large subunit assembly"/>
    <property type="evidence" value="ECO:0007669"/>
    <property type="project" value="UniProtKB-UniRule"/>
</dbReference>
<dbReference type="GO" id="GO:0006412">
    <property type="term" value="P:translation"/>
    <property type="evidence" value="ECO:0007669"/>
    <property type="project" value="InterPro"/>
</dbReference>
<dbReference type="CDD" id="cd07026">
    <property type="entry name" value="Ribosomal_L20"/>
    <property type="match status" value="1"/>
</dbReference>
<dbReference type="FunFam" id="1.10.1900.20:FF:000001">
    <property type="entry name" value="50S ribosomal protein L20"/>
    <property type="match status" value="1"/>
</dbReference>
<dbReference type="Gene3D" id="6.10.160.10">
    <property type="match status" value="1"/>
</dbReference>
<dbReference type="Gene3D" id="1.10.1900.20">
    <property type="entry name" value="Ribosomal protein L20"/>
    <property type="match status" value="1"/>
</dbReference>
<dbReference type="HAMAP" id="MF_00382">
    <property type="entry name" value="Ribosomal_bL20"/>
    <property type="match status" value="1"/>
</dbReference>
<dbReference type="InterPro" id="IPR005813">
    <property type="entry name" value="Ribosomal_bL20"/>
</dbReference>
<dbReference type="InterPro" id="IPR049946">
    <property type="entry name" value="RIBOSOMAL_L20_CS"/>
</dbReference>
<dbReference type="InterPro" id="IPR035566">
    <property type="entry name" value="Ribosomal_protein_bL20_C"/>
</dbReference>
<dbReference type="NCBIfam" id="TIGR01032">
    <property type="entry name" value="rplT_bact"/>
    <property type="match status" value="1"/>
</dbReference>
<dbReference type="PANTHER" id="PTHR10986">
    <property type="entry name" value="39S RIBOSOMAL PROTEIN L20"/>
    <property type="match status" value="1"/>
</dbReference>
<dbReference type="Pfam" id="PF00453">
    <property type="entry name" value="Ribosomal_L20"/>
    <property type="match status" value="1"/>
</dbReference>
<dbReference type="PRINTS" id="PR00062">
    <property type="entry name" value="RIBOSOMALL20"/>
</dbReference>
<dbReference type="SUPFAM" id="SSF74731">
    <property type="entry name" value="Ribosomal protein L20"/>
    <property type="match status" value="1"/>
</dbReference>
<dbReference type="PROSITE" id="PS00937">
    <property type="entry name" value="RIBOSOMAL_L20"/>
    <property type="match status" value="1"/>
</dbReference>
<sequence length="128" mass="15251">MTRIRRGNIARRRRTKIRLFASSFRGAHSRLTRTITQQKIRALVSSHRDRDKQKRNFRRLWITRINAVIREIGVSYSYSRLIHALYKKQVLLNRKILAQIAISNKNCLYMISNEIIKEVDWKESTGII</sequence>
<feature type="chain" id="PRO_0000276406" description="Large ribosomal subunit protein bL20c">
    <location>
        <begin position="1"/>
        <end position="128"/>
    </location>
</feature>
<protein>
    <recommendedName>
        <fullName evidence="1">Large ribosomal subunit protein bL20c</fullName>
    </recommendedName>
    <alternativeName>
        <fullName evidence="2">50S ribosomal protein L20, chloroplastic</fullName>
    </alternativeName>
</protein>
<proteinExistence type="inferred from homology"/>
<keyword id="KW-0150">Chloroplast</keyword>
<keyword id="KW-0934">Plastid</keyword>
<keyword id="KW-0687">Ribonucleoprotein</keyword>
<keyword id="KW-0689">Ribosomal protein</keyword>
<keyword id="KW-0694">RNA-binding</keyword>
<keyword id="KW-0699">rRNA-binding</keyword>
<geneLocation type="chloroplast"/>
<reference key="1">
    <citation type="journal article" date="2006" name="BMC Genomics">
        <title>Complete plastid genome sequence of Daucus carota: implications for biotechnology and phylogeny of angiosperms.</title>
        <authorList>
            <person name="Ruhlman T."/>
            <person name="Lee S.-B."/>
            <person name="Jansen R.K."/>
            <person name="Hostetler J.B."/>
            <person name="Tallon L.J."/>
            <person name="Town C.D."/>
            <person name="Daniell H."/>
        </authorList>
    </citation>
    <scope>NUCLEOTIDE SEQUENCE [LARGE SCALE GENOMIC DNA]</scope>
    <source>
        <strain>cv. Danvers Half-long</strain>
    </source>
</reference>
<comment type="function">
    <text evidence="1">Binds directly to 23S ribosomal RNA and is necessary for the in vitro assembly process of the 50S ribosomal subunit. It is not involved in the protein synthesizing functions of that subunit.</text>
</comment>
<comment type="subcellular location">
    <subcellularLocation>
        <location>Plastid</location>
        <location>Chloroplast</location>
    </subcellularLocation>
</comment>
<comment type="similarity">
    <text evidence="1">Belongs to the bacterial ribosomal protein bL20 family.</text>
</comment>
<accession>Q0G9T9</accession>